<dbReference type="EMBL" id="AY428506">
    <property type="protein sequence ID" value="AAR89524.1"/>
    <property type="molecule type" value="mRNA"/>
</dbReference>
<dbReference type="EMBL" id="BC085838">
    <property type="protein sequence ID" value="AAH85838.1"/>
    <property type="molecule type" value="mRNA"/>
</dbReference>
<dbReference type="RefSeq" id="NP_001007011.1">
    <property type="nucleotide sequence ID" value="NM_001007010.1"/>
</dbReference>
<dbReference type="SMR" id="Q5VJS5"/>
<dbReference type="BioGRID" id="263962">
    <property type="interactions" value="2"/>
</dbReference>
<dbReference type="FunCoup" id="Q5VJS5">
    <property type="interactions" value="210"/>
</dbReference>
<dbReference type="STRING" id="10116.ENSRNOP00000072890"/>
<dbReference type="PhosphoSitePlus" id="Q5VJS5"/>
<dbReference type="PaxDb" id="10116-ENSRNOP00000029714"/>
<dbReference type="Ensembl" id="ENSRNOT00000085959.2">
    <property type="protein sequence ID" value="ENSRNOP00000072890.1"/>
    <property type="gene ID" value="ENSRNOG00000056654.2"/>
</dbReference>
<dbReference type="GeneID" id="363096"/>
<dbReference type="KEGG" id="rno:363096"/>
<dbReference type="UCSC" id="RGD:1549760">
    <property type="organism name" value="rat"/>
</dbReference>
<dbReference type="AGR" id="RGD:1549760"/>
<dbReference type="CTD" id="161582"/>
<dbReference type="RGD" id="1549760">
    <property type="gene designation" value="Dnaaf4"/>
</dbReference>
<dbReference type="eggNOG" id="KOG1124">
    <property type="taxonomic scope" value="Eukaryota"/>
</dbReference>
<dbReference type="GeneTree" id="ENSGT00390000004930"/>
<dbReference type="HOGENOM" id="CLU_029084_0_0_1"/>
<dbReference type="InParanoid" id="Q5VJS5"/>
<dbReference type="OMA" id="ELAAWHF"/>
<dbReference type="OrthoDB" id="348005at2759"/>
<dbReference type="PhylomeDB" id="Q5VJS5"/>
<dbReference type="TreeFam" id="TF328983"/>
<dbReference type="PRO" id="PR:Q5VJS5"/>
<dbReference type="Proteomes" id="UP000002494">
    <property type="component" value="Chromosome 8"/>
</dbReference>
<dbReference type="Bgee" id="ENSRNOG00000056654">
    <property type="expression patterns" value="Expressed in testis and 11 other cell types or tissues"/>
</dbReference>
<dbReference type="GO" id="GO:0005813">
    <property type="term" value="C:centrosome"/>
    <property type="evidence" value="ECO:0000314"/>
    <property type="project" value="MGI"/>
</dbReference>
<dbReference type="GO" id="GO:0005737">
    <property type="term" value="C:cytoplasm"/>
    <property type="evidence" value="ECO:0000314"/>
    <property type="project" value="UniProtKB"/>
</dbReference>
<dbReference type="GO" id="GO:0120293">
    <property type="term" value="C:dynein axonemal particle"/>
    <property type="evidence" value="ECO:0000250"/>
    <property type="project" value="UniProtKB"/>
</dbReference>
<dbReference type="GO" id="GO:0005576">
    <property type="term" value="C:extracellular region"/>
    <property type="evidence" value="ECO:0007669"/>
    <property type="project" value="GOC"/>
</dbReference>
<dbReference type="GO" id="GO:0043005">
    <property type="term" value="C:neuron projection"/>
    <property type="evidence" value="ECO:0007669"/>
    <property type="project" value="UniProtKB-SubCell"/>
</dbReference>
<dbReference type="GO" id="GO:0097730">
    <property type="term" value="C:non-motile cilium"/>
    <property type="evidence" value="ECO:0000314"/>
    <property type="project" value="MGI"/>
</dbReference>
<dbReference type="GO" id="GO:0005634">
    <property type="term" value="C:nucleus"/>
    <property type="evidence" value="ECO:0000250"/>
    <property type="project" value="UniProtKB"/>
</dbReference>
<dbReference type="GO" id="GO:0030331">
    <property type="term" value="F:nuclear estrogen receptor binding"/>
    <property type="evidence" value="ECO:0000314"/>
    <property type="project" value="UniProtKB"/>
</dbReference>
<dbReference type="GO" id="GO:0003341">
    <property type="term" value="P:cilium movement"/>
    <property type="evidence" value="ECO:0000250"/>
    <property type="project" value="UniProtKB"/>
</dbReference>
<dbReference type="GO" id="GO:0007368">
    <property type="term" value="P:determination of left/right symmetry"/>
    <property type="evidence" value="ECO:0000250"/>
    <property type="project" value="UniProtKB"/>
</dbReference>
<dbReference type="GO" id="GO:0003351">
    <property type="term" value="P:epithelial cilium movement involved in extracellular fluid movement"/>
    <property type="evidence" value="ECO:0000266"/>
    <property type="project" value="RGD"/>
</dbReference>
<dbReference type="GO" id="GO:0051649">
    <property type="term" value="P:establishment of localization in cell"/>
    <property type="evidence" value="ECO:0000266"/>
    <property type="project" value="RGD"/>
</dbReference>
<dbReference type="GO" id="GO:0007507">
    <property type="term" value="P:heart development"/>
    <property type="evidence" value="ECO:0000266"/>
    <property type="project" value="RGD"/>
</dbReference>
<dbReference type="GO" id="GO:0036159">
    <property type="term" value="P:inner dynein arm assembly"/>
    <property type="evidence" value="ECO:0000250"/>
    <property type="project" value="UniProtKB"/>
</dbReference>
<dbReference type="GO" id="GO:0007611">
    <property type="term" value="P:learning or memory"/>
    <property type="evidence" value="ECO:0000266"/>
    <property type="project" value="RGD"/>
</dbReference>
<dbReference type="GO" id="GO:0001764">
    <property type="term" value="P:neuron migration"/>
    <property type="evidence" value="ECO:0000315"/>
    <property type="project" value="UniProtKB"/>
</dbReference>
<dbReference type="GO" id="GO:0036158">
    <property type="term" value="P:outer dynein arm assembly"/>
    <property type="evidence" value="ECO:0000250"/>
    <property type="project" value="UniProtKB"/>
</dbReference>
<dbReference type="GO" id="GO:0033146">
    <property type="term" value="P:regulation of intracellular estrogen receptor signaling pathway"/>
    <property type="evidence" value="ECO:0000250"/>
    <property type="project" value="UniProtKB"/>
</dbReference>
<dbReference type="GO" id="GO:0061136">
    <property type="term" value="P:regulation of proteasomal protein catabolic process"/>
    <property type="evidence" value="ECO:0000250"/>
    <property type="project" value="UniProtKB"/>
</dbReference>
<dbReference type="CDD" id="cd06469">
    <property type="entry name" value="p23_DYX1C1_like"/>
    <property type="match status" value="1"/>
</dbReference>
<dbReference type="FunFam" id="1.25.40.10:FF:000176">
    <property type="entry name" value="dynein assembly factor 4, axonemal isoform X1"/>
    <property type="match status" value="1"/>
</dbReference>
<dbReference type="FunFam" id="2.60.40.790:FF:000015">
    <property type="entry name" value="dynein assembly factor 4, axonemal isoform X1"/>
    <property type="match status" value="1"/>
</dbReference>
<dbReference type="Gene3D" id="2.60.40.790">
    <property type="match status" value="1"/>
</dbReference>
<dbReference type="Gene3D" id="1.25.40.10">
    <property type="entry name" value="Tetratricopeptide repeat domain"/>
    <property type="match status" value="1"/>
</dbReference>
<dbReference type="InterPro" id="IPR007052">
    <property type="entry name" value="CS_dom"/>
</dbReference>
<dbReference type="InterPro" id="IPR037894">
    <property type="entry name" value="CS_DYX1C1"/>
</dbReference>
<dbReference type="InterPro" id="IPR052004">
    <property type="entry name" value="Dynein_assembly_factor_4"/>
</dbReference>
<dbReference type="InterPro" id="IPR008978">
    <property type="entry name" value="HSP20-like_chaperone"/>
</dbReference>
<dbReference type="InterPro" id="IPR011990">
    <property type="entry name" value="TPR-like_helical_dom_sf"/>
</dbReference>
<dbReference type="InterPro" id="IPR019734">
    <property type="entry name" value="TPR_rpt"/>
</dbReference>
<dbReference type="PANTHER" id="PTHR46492">
    <property type="entry name" value="DYNEIN ASSEMBLY FACTOR 4, AXONEMAL"/>
    <property type="match status" value="1"/>
</dbReference>
<dbReference type="PANTHER" id="PTHR46492:SF1">
    <property type="entry name" value="DYNEIN AXONEMAL ASSEMBLY FACTOR 4"/>
    <property type="match status" value="1"/>
</dbReference>
<dbReference type="Pfam" id="PF04969">
    <property type="entry name" value="CS"/>
    <property type="match status" value="1"/>
</dbReference>
<dbReference type="SMART" id="SM00028">
    <property type="entry name" value="TPR"/>
    <property type="match status" value="3"/>
</dbReference>
<dbReference type="SUPFAM" id="SSF49764">
    <property type="entry name" value="HSP20-like chaperones"/>
    <property type="match status" value="1"/>
</dbReference>
<dbReference type="SUPFAM" id="SSF48452">
    <property type="entry name" value="TPR-like"/>
    <property type="match status" value="1"/>
</dbReference>
<dbReference type="PROSITE" id="PS51203">
    <property type="entry name" value="CS"/>
    <property type="match status" value="1"/>
</dbReference>
<dbReference type="PROSITE" id="PS50005">
    <property type="entry name" value="TPR"/>
    <property type="match status" value="3"/>
</dbReference>
<dbReference type="PROSITE" id="PS50293">
    <property type="entry name" value="TPR_REGION"/>
    <property type="match status" value="1"/>
</dbReference>
<evidence type="ECO:0000250" key="1"/>
<evidence type="ECO:0000250" key="2">
    <source>
        <dbReference type="UniProtKB" id="Q6AZN0"/>
    </source>
</evidence>
<evidence type="ECO:0000250" key="3">
    <source>
        <dbReference type="UniProtKB" id="Q8R368"/>
    </source>
</evidence>
<evidence type="ECO:0000250" key="4">
    <source>
        <dbReference type="UniProtKB" id="Q8WXU2"/>
    </source>
</evidence>
<evidence type="ECO:0000255" key="5">
    <source>
        <dbReference type="PROSITE-ProRule" id="PRU00547"/>
    </source>
</evidence>
<evidence type="ECO:0000256" key="6">
    <source>
        <dbReference type="SAM" id="MobiDB-lite"/>
    </source>
</evidence>
<evidence type="ECO:0000269" key="7">
    <source>
    </source>
</evidence>
<evidence type="ECO:0000269" key="8">
    <source>
    </source>
</evidence>
<evidence type="ECO:0000312" key="9">
    <source>
        <dbReference type="RGD" id="1549760"/>
    </source>
</evidence>
<gene>
    <name evidence="9" type="primary">Dnaaf4</name>
    <name type="synonym">Dyx1c1</name>
    <name type="synonym">Ekn1</name>
</gene>
<accession>Q5VJS5</accession>
<keyword id="KW-0966">Cell projection</keyword>
<keyword id="KW-0963">Cytoplasm</keyword>
<keyword id="KW-0524">Neurogenesis</keyword>
<keyword id="KW-0539">Nucleus</keyword>
<keyword id="KW-1185">Reference proteome</keyword>
<keyword id="KW-0677">Repeat</keyword>
<keyword id="KW-0802">TPR repeat</keyword>
<organism>
    <name type="scientific">Rattus norvegicus</name>
    <name type="common">Rat</name>
    <dbReference type="NCBI Taxonomy" id="10116"/>
    <lineage>
        <taxon>Eukaryota</taxon>
        <taxon>Metazoa</taxon>
        <taxon>Chordata</taxon>
        <taxon>Craniata</taxon>
        <taxon>Vertebrata</taxon>
        <taxon>Euteleostomi</taxon>
        <taxon>Mammalia</taxon>
        <taxon>Eutheria</taxon>
        <taxon>Euarchontoglires</taxon>
        <taxon>Glires</taxon>
        <taxon>Rodentia</taxon>
        <taxon>Myomorpha</taxon>
        <taxon>Muroidea</taxon>
        <taxon>Muridae</taxon>
        <taxon>Murinae</taxon>
        <taxon>Rattus</taxon>
    </lineage>
</organism>
<proteinExistence type="evidence at protein level"/>
<protein>
    <recommendedName>
        <fullName evidence="9">Dynein axonemal assembly factor 4</fullName>
    </recommendedName>
    <alternativeName>
        <fullName evidence="4">Dyslexia susceptibility 1 candidate gene 1 protein homolog</fullName>
    </alternativeName>
</protein>
<comment type="function">
    <text evidence="4 7">Involved in neuronal migration during development of the cerebral neocortex. May regulate the stability and proteasomal degradation of the estrogen receptors that play an important role in neuronal differentiation, survival and plasticity. Axonemal dynein assembly factor required for ciliary motility (By similarity).</text>
</comment>
<comment type="subunit">
    <text evidence="3 4">Interacts with ZMYND10 (By similarity). Interacts with STUB1 (By similarity). Interacts with ESR1 and ESR2. Interacts with DNAAF2 (By similarity). Interacts with CCT3, CCT4, CCT5 and CCT8 (By similarity). Interacts with DNAAF6/PIH1D3 (By similarity).</text>
</comment>
<comment type="subcellular location">
    <subcellularLocation>
        <location evidence="4">Nucleus</location>
    </subcellularLocation>
    <subcellularLocation>
        <location evidence="7">Cytoplasm</location>
    </subcellularLocation>
    <subcellularLocation>
        <location evidence="8">Cell projection</location>
        <location evidence="8">Neuron projection</location>
    </subcellularLocation>
    <subcellularLocation>
        <location evidence="2">Dynein axonemal particle</location>
    </subcellularLocation>
</comment>
<feature type="chain" id="PRO_0000403480" description="Dynein axonemal assembly factor 4">
    <location>
        <begin position="1"/>
        <end position="420"/>
    </location>
</feature>
<feature type="domain" description="CS" evidence="5">
    <location>
        <begin position="3"/>
        <end position="87"/>
    </location>
</feature>
<feature type="repeat" description="TPR 1">
    <location>
        <begin position="288"/>
        <end position="321"/>
    </location>
</feature>
<feature type="repeat" description="TPR 2">
    <location>
        <begin position="323"/>
        <end position="355"/>
    </location>
</feature>
<feature type="repeat" description="TPR 3">
    <location>
        <begin position="364"/>
        <end position="397"/>
    </location>
</feature>
<feature type="region of interest" description="Mediates interaction with ESR1 and STUB1" evidence="1">
    <location>
        <begin position="7"/>
        <end position="103"/>
    </location>
</feature>
<feature type="region of interest" description="Disordered" evidence="6">
    <location>
        <begin position="165"/>
        <end position="212"/>
    </location>
</feature>
<feature type="compositionally biased region" description="Basic and acidic residues" evidence="6">
    <location>
        <begin position="165"/>
        <end position="192"/>
    </location>
</feature>
<sequence length="420" mass="48119">MPVRVSEFSWQQTPAALFLSLPLRGVCVRDADVFCGESYLKVNFPPFLFEVFLYAPIDDGKSKAKIGNDTILFTLYKKEPVLWESLSMPGVDKEMMQRIREKSILQAQEKAKEATEAKAAAKREDQRYALGEMMKIEEEERKKIEDMKENERKKATRELEAWKECQKKADGQKRVQRKEKPLQGKQAEERGALKPQSLPRKAPPTRLPTRGRNWENIFSEKLKEDRVPAPRSAGSIQISFTPRVFPTALRESQVAEEEEWLHKQAEARRAMSTDLPEFSDLKEEEKNPDWLKDKGNKLFATENYLAAIDAYNLAIRLNRKIPVLYLNRAACHLKLKNLHKAIEDSSKALELLTPPVADNANARMKAHVRRGTAFCQLELYVEGLQDYEAALKIDPANTVVQNDAEKIRNIIQGTTLKSHD</sequence>
<reference key="1">
    <citation type="submission" date="2003-10" db="EMBL/GenBank/DDBJ databases">
        <title>Molecular structure and evolution of EKN1 genes in a new combination of co-chaperone p23 with tetratricopeptide repeat domain.</title>
        <authorList>
            <person name="Chen Y."/>
            <person name="Dong W."/>
            <person name="Peng J."/>
            <person name="Huang C."/>
        </authorList>
    </citation>
    <scope>NUCLEOTIDE SEQUENCE [MRNA]</scope>
    <source>
        <strain>Sprague-Dawley</strain>
    </source>
</reference>
<reference key="2">
    <citation type="journal article" date="2004" name="Genome Res.">
        <title>The status, quality, and expansion of the NIH full-length cDNA project: the Mammalian Gene Collection (MGC).</title>
        <authorList>
            <consortium name="The MGC Project Team"/>
        </authorList>
    </citation>
    <scope>NUCLEOTIDE SEQUENCE [LARGE SCALE MRNA]</scope>
    <source>
        <tissue>Testis</tissue>
    </source>
</reference>
<reference key="3">
    <citation type="journal article" date="2006" name="Neuroscience">
        <title>DYX1C1 functions in neuronal migration in developing neocortex.</title>
        <authorList>
            <person name="Wang Y."/>
            <person name="Paramasivam M."/>
            <person name="Thomas A."/>
            <person name="Bai J."/>
            <person name="Kaminen-Ahola N."/>
            <person name="Kere J."/>
            <person name="Voskuil J."/>
            <person name="Rosen G.D."/>
            <person name="Galaburda A.M."/>
            <person name="Loturco J.J."/>
        </authorList>
    </citation>
    <scope>FUNCTION</scope>
    <scope>SUBCELLULAR LOCATION</scope>
</reference>
<reference key="4">
    <citation type="journal article" date="2009" name="Hum. Mol. Genet.">
        <title>Functional interaction of DYX1C1 with estrogen receptors suggests involvement of hormonal pathways in dyslexia.</title>
        <authorList>
            <person name="Massinen S."/>
            <person name="Tammimies K."/>
            <person name="Tapia-Paez I."/>
            <person name="Matsson H."/>
            <person name="Hokkanen M.E."/>
            <person name="Soederberg O."/>
            <person name="Landegren U."/>
            <person name="Castren E."/>
            <person name="Gustafsson J.A."/>
            <person name="Treuter E."/>
            <person name="Kere J."/>
        </authorList>
    </citation>
    <scope>INTERACTION WITH ESR1 AND ESR2</scope>
    <scope>SUBCELLULAR LOCATION</scope>
</reference>
<name>DAAF4_RAT</name>